<organism>
    <name type="scientific">Escherichia coli O6:H1 (strain CFT073 / ATCC 700928 / UPEC)</name>
    <dbReference type="NCBI Taxonomy" id="199310"/>
    <lineage>
        <taxon>Bacteria</taxon>
        <taxon>Pseudomonadati</taxon>
        <taxon>Pseudomonadota</taxon>
        <taxon>Gammaproteobacteria</taxon>
        <taxon>Enterobacterales</taxon>
        <taxon>Enterobacteriaceae</taxon>
        <taxon>Escherichia</taxon>
    </lineage>
</organism>
<feature type="chain" id="PRO_0000184975" description="Mannosyl-3-phosphoglycerate phosphatase">
    <location>
        <begin position="1"/>
        <end position="271"/>
    </location>
</feature>
<feature type="active site" description="Nucleophile" evidence="1">
    <location>
        <position position="13"/>
    </location>
</feature>
<feature type="binding site" evidence="1">
    <location>
        <position position="13"/>
    </location>
    <ligand>
        <name>Mg(2+)</name>
        <dbReference type="ChEBI" id="CHEBI:18420"/>
    </ligand>
</feature>
<feature type="binding site" evidence="1">
    <location>
        <position position="15"/>
    </location>
    <ligand>
        <name>Mg(2+)</name>
        <dbReference type="ChEBI" id="CHEBI:18420"/>
    </ligand>
</feature>
<feature type="binding site" evidence="1">
    <location>
        <position position="214"/>
    </location>
    <ligand>
        <name>Mg(2+)</name>
        <dbReference type="ChEBI" id="CHEBI:18420"/>
    </ligand>
</feature>
<comment type="catalytic activity">
    <reaction evidence="1">
        <text>2-O-(alpha-D-mannosyl)-3-phosphoglycerate + H2O = (2R)-2-O-(alpha-D-mannosyl)-glycerate + phosphate</text>
        <dbReference type="Rhea" id="RHEA:19309"/>
        <dbReference type="ChEBI" id="CHEBI:15377"/>
        <dbReference type="ChEBI" id="CHEBI:43474"/>
        <dbReference type="ChEBI" id="CHEBI:57541"/>
        <dbReference type="ChEBI" id="CHEBI:57744"/>
        <dbReference type="EC" id="3.1.3.70"/>
    </reaction>
</comment>
<comment type="cofactor">
    <cofactor evidence="1">
        <name>Mg(2+)</name>
        <dbReference type="ChEBI" id="CHEBI:18420"/>
    </cofactor>
</comment>
<comment type="subcellular location">
    <subcellularLocation>
        <location evidence="1">Cytoplasm</location>
    </subcellularLocation>
</comment>
<comment type="similarity">
    <text evidence="1">Belongs to the HAD-like hydrolase superfamily. MPGP family.</text>
</comment>
<keyword id="KW-0963">Cytoplasm</keyword>
<keyword id="KW-0378">Hydrolase</keyword>
<keyword id="KW-0460">Magnesium</keyword>
<keyword id="KW-0479">Metal-binding</keyword>
<keyword id="KW-1185">Reference proteome</keyword>
<proteinExistence type="inferred from homology"/>
<name>MPGP_ECOL6</name>
<protein>
    <recommendedName>
        <fullName evidence="1">Mannosyl-3-phosphoglycerate phosphatase</fullName>
        <shortName evidence="1">MPGP</shortName>
        <ecNumber evidence="1">3.1.3.70</ecNumber>
    </recommendedName>
</protein>
<reference key="1">
    <citation type="journal article" date="2002" name="Proc. Natl. Acad. Sci. U.S.A.">
        <title>Extensive mosaic structure revealed by the complete genome sequence of uropathogenic Escherichia coli.</title>
        <authorList>
            <person name="Welch R.A."/>
            <person name="Burland V."/>
            <person name="Plunkett G. III"/>
            <person name="Redford P."/>
            <person name="Roesch P."/>
            <person name="Rasko D."/>
            <person name="Buckles E.L."/>
            <person name="Liou S.-R."/>
            <person name="Boutin A."/>
            <person name="Hackett J."/>
            <person name="Stroud D."/>
            <person name="Mayhew G.F."/>
            <person name="Rose D.J."/>
            <person name="Zhou S."/>
            <person name="Schwartz D.C."/>
            <person name="Perna N.T."/>
            <person name="Mobley H.L.T."/>
            <person name="Donnenberg M.S."/>
            <person name="Blattner F.R."/>
        </authorList>
    </citation>
    <scope>NUCLEOTIDE SEQUENCE [LARGE SCALE GENOMIC DNA]</scope>
    <source>
        <strain>CFT073 / ATCC 700928 / UPEC</strain>
    </source>
</reference>
<accession>P59286</accession>
<gene>
    <name type="primary">yedP</name>
    <name type="ordered locus">c2373</name>
</gene>
<evidence type="ECO:0000255" key="1">
    <source>
        <dbReference type="HAMAP-Rule" id="MF_00617"/>
    </source>
</evidence>
<sequence>MFSIQQPLLVFSDLDGTLLDSHSYDWQPAAPWLSRLHEANIPVILCSSKTSAEMLYLQKMLGLQGLPLIAENGAVIQLAEQWQDIDGFPRIISGISHGEICQVLNKLREKEHFKFTTFDDVDDATIAEWTGLSRSQAALTQLHEASVTLIWRDSDEHMAQFIARLNELGLQFMQGARFWHVLDASAGKDQAANWIIATYQQLSGRRPTTLGLGDGPNDAPLLEVMDYAVIVKGLNREGVHLHDEDPARVWRTQREGPEGWREGLDHFFSAR</sequence>
<dbReference type="EC" id="3.1.3.70" evidence="1"/>
<dbReference type="EMBL" id="AE014075">
    <property type="protein sequence ID" value="AAN80832.1"/>
    <property type="molecule type" value="Genomic_DNA"/>
</dbReference>
<dbReference type="RefSeq" id="WP_000491477.1">
    <property type="nucleotide sequence ID" value="NZ_CP051263.1"/>
</dbReference>
<dbReference type="SMR" id="P59286"/>
<dbReference type="STRING" id="199310.c2373"/>
<dbReference type="KEGG" id="ecc:c2373"/>
<dbReference type="eggNOG" id="COG3769">
    <property type="taxonomic scope" value="Bacteria"/>
</dbReference>
<dbReference type="HOGENOM" id="CLU_063016_1_0_6"/>
<dbReference type="BioCyc" id="ECOL199310:C2373-MONOMER"/>
<dbReference type="Proteomes" id="UP000001410">
    <property type="component" value="Chromosome"/>
</dbReference>
<dbReference type="GO" id="GO:0005829">
    <property type="term" value="C:cytosol"/>
    <property type="evidence" value="ECO:0007669"/>
    <property type="project" value="TreeGrafter"/>
</dbReference>
<dbReference type="GO" id="GO:0000287">
    <property type="term" value="F:magnesium ion binding"/>
    <property type="evidence" value="ECO:0007669"/>
    <property type="project" value="TreeGrafter"/>
</dbReference>
<dbReference type="GO" id="GO:0050531">
    <property type="term" value="F:mannosyl-3-phosphoglycerate phosphatase activity"/>
    <property type="evidence" value="ECO:0007669"/>
    <property type="project" value="UniProtKB-UniRule"/>
</dbReference>
<dbReference type="GO" id="GO:0051479">
    <property type="term" value="P:mannosylglycerate biosynthetic process"/>
    <property type="evidence" value="ECO:0007669"/>
    <property type="project" value="InterPro"/>
</dbReference>
<dbReference type="CDD" id="cd07507">
    <property type="entry name" value="HAD_Pase"/>
    <property type="match status" value="1"/>
</dbReference>
<dbReference type="Gene3D" id="3.40.50.1000">
    <property type="entry name" value="HAD superfamily/HAD-like"/>
    <property type="match status" value="1"/>
</dbReference>
<dbReference type="Gene3D" id="3.30.980.20">
    <property type="entry name" value="Putative mannosyl-3-phosphoglycerate phosphatase, domain 2"/>
    <property type="match status" value="1"/>
</dbReference>
<dbReference type="HAMAP" id="MF_00617">
    <property type="entry name" value="MPGP_rel"/>
    <property type="match status" value="1"/>
</dbReference>
<dbReference type="InterPro" id="IPR036412">
    <property type="entry name" value="HAD-like_sf"/>
</dbReference>
<dbReference type="InterPro" id="IPR006381">
    <property type="entry name" value="HAD-SF-IIB-MPGP"/>
</dbReference>
<dbReference type="InterPro" id="IPR006379">
    <property type="entry name" value="HAD-SF_hydro_IIB"/>
</dbReference>
<dbReference type="InterPro" id="IPR023214">
    <property type="entry name" value="HAD_sf"/>
</dbReference>
<dbReference type="InterPro" id="IPR012815">
    <property type="entry name" value="MPG_Pase"/>
</dbReference>
<dbReference type="NCBIfam" id="TIGR01484">
    <property type="entry name" value="HAD-SF-IIB"/>
    <property type="match status" value="1"/>
</dbReference>
<dbReference type="NCBIfam" id="TIGR01486">
    <property type="entry name" value="HAD-SF-IIB-MPGP"/>
    <property type="match status" value="1"/>
</dbReference>
<dbReference type="NCBIfam" id="TIGR02463">
    <property type="entry name" value="MPGP_rel"/>
    <property type="match status" value="1"/>
</dbReference>
<dbReference type="NCBIfam" id="NF002976">
    <property type="entry name" value="PRK03669.1"/>
    <property type="match status" value="1"/>
</dbReference>
<dbReference type="PANTHER" id="PTHR10000:SF8">
    <property type="entry name" value="HAD SUPERFAMILY HYDROLASE-LIKE, TYPE 3"/>
    <property type="match status" value="1"/>
</dbReference>
<dbReference type="PANTHER" id="PTHR10000">
    <property type="entry name" value="PHOSPHOSERINE PHOSPHATASE"/>
    <property type="match status" value="1"/>
</dbReference>
<dbReference type="Pfam" id="PF08282">
    <property type="entry name" value="Hydrolase_3"/>
    <property type="match status" value="1"/>
</dbReference>
<dbReference type="SFLD" id="SFLDG01142">
    <property type="entry name" value="C2.B.2:_Mannosyl-3-phosphoglyc"/>
    <property type="match status" value="1"/>
</dbReference>
<dbReference type="SFLD" id="SFLDS00003">
    <property type="entry name" value="Haloacid_Dehalogenase"/>
    <property type="match status" value="1"/>
</dbReference>
<dbReference type="SUPFAM" id="SSF56784">
    <property type="entry name" value="HAD-like"/>
    <property type="match status" value="1"/>
</dbReference>